<feature type="chain" id="PRO_0000191521" description="Sperm protamine P1">
    <location>
        <begin position="1"/>
        <end position="51"/>
    </location>
</feature>
<gene>
    <name type="primary">PRM1</name>
</gene>
<sequence>MARYRCCRSQSRSRCCRRRRRCRRRRRRRCRARRRAMRCCRRRYRLRCRRY</sequence>
<dbReference type="EMBL" id="AF119239">
    <property type="protein sequence ID" value="AAG42163.1"/>
    <property type="molecule type" value="Genomic_DNA"/>
</dbReference>
<dbReference type="GO" id="GO:0000786">
    <property type="term" value="C:nucleosome"/>
    <property type="evidence" value="ECO:0007669"/>
    <property type="project" value="UniProtKB-KW"/>
</dbReference>
<dbReference type="GO" id="GO:0005634">
    <property type="term" value="C:nucleus"/>
    <property type="evidence" value="ECO:0007669"/>
    <property type="project" value="UniProtKB-SubCell"/>
</dbReference>
<dbReference type="GO" id="GO:0003677">
    <property type="term" value="F:DNA binding"/>
    <property type="evidence" value="ECO:0007669"/>
    <property type="project" value="UniProtKB-KW"/>
</dbReference>
<dbReference type="GO" id="GO:0030261">
    <property type="term" value="P:chromosome condensation"/>
    <property type="evidence" value="ECO:0007669"/>
    <property type="project" value="UniProtKB-KW"/>
</dbReference>
<dbReference type="GO" id="GO:0035092">
    <property type="term" value="P:sperm DNA condensation"/>
    <property type="evidence" value="ECO:0007669"/>
    <property type="project" value="InterPro"/>
</dbReference>
<dbReference type="InterPro" id="IPR000221">
    <property type="entry name" value="Protamine_P1"/>
</dbReference>
<dbReference type="Pfam" id="PF00260">
    <property type="entry name" value="Protamine_P1"/>
    <property type="match status" value="1"/>
</dbReference>
<dbReference type="PROSITE" id="PS00048">
    <property type="entry name" value="PROTAMINE_P1"/>
    <property type="match status" value="1"/>
</dbReference>
<proteinExistence type="inferred from homology"/>
<keyword id="KW-0158">Chromosome</keyword>
<keyword id="KW-0217">Developmental protein</keyword>
<keyword id="KW-0221">Differentiation</keyword>
<keyword id="KW-0226">DNA condensation</keyword>
<keyword id="KW-0238">DNA-binding</keyword>
<keyword id="KW-0544">Nucleosome core</keyword>
<keyword id="KW-0539">Nucleus</keyword>
<keyword id="KW-0744">Spermatogenesis</keyword>
<name>HSP1_PAPCY</name>
<organism>
    <name type="scientific">Papio cynocephalus</name>
    <name type="common">Yellow baboon</name>
    <dbReference type="NCBI Taxonomy" id="9556"/>
    <lineage>
        <taxon>Eukaryota</taxon>
        <taxon>Metazoa</taxon>
        <taxon>Chordata</taxon>
        <taxon>Craniata</taxon>
        <taxon>Vertebrata</taxon>
        <taxon>Euteleostomi</taxon>
        <taxon>Mammalia</taxon>
        <taxon>Eutheria</taxon>
        <taxon>Euarchontoglires</taxon>
        <taxon>Primates</taxon>
        <taxon>Haplorrhini</taxon>
        <taxon>Catarrhini</taxon>
        <taxon>Cercopithecidae</taxon>
        <taxon>Cercopithecinae</taxon>
        <taxon>Papio</taxon>
    </lineage>
</organism>
<protein>
    <recommendedName>
        <fullName>Sperm protamine P1</fullName>
    </recommendedName>
</protein>
<reference key="1">
    <citation type="submission" date="1998-10" db="EMBL/GenBank/DDBJ databases">
        <title>Positive Darwinian selection on the lineage leading to humans.</title>
        <authorList>
            <person name="Karanth P.K."/>
            <person name="Stewart C.-B."/>
            <person name="Holt R.A."/>
            <person name="de Koning J."/>
            <person name="Messier W."/>
        </authorList>
    </citation>
    <scope>NUCLEOTIDE SEQUENCE [GENOMIC DNA]</scope>
</reference>
<comment type="function">
    <text evidence="1">Protamines substitute for histones in the chromatin of sperm during the haploid phase of spermatogenesis. They compact sperm DNA into a highly condensed, stable and inactive complex (By similarity).</text>
</comment>
<comment type="subcellular location">
    <subcellularLocation>
        <location evidence="1">Nucleus</location>
    </subcellularLocation>
    <subcellularLocation>
        <location evidence="1">Chromosome</location>
    </subcellularLocation>
</comment>
<comment type="similarity">
    <text evidence="2">Belongs to the protamine P1 family.</text>
</comment>
<accession>Q7JIX8</accession>
<evidence type="ECO:0000250" key="1"/>
<evidence type="ECO:0000305" key="2"/>